<proteinExistence type="inferred from homology"/>
<dbReference type="EMBL" id="AAFI02000082">
    <property type="protein sequence ID" value="EAL64472.1"/>
    <property type="molecule type" value="Genomic_DNA"/>
</dbReference>
<dbReference type="RefSeq" id="XP_637976.1">
    <property type="nucleotide sequence ID" value="XM_632884.1"/>
</dbReference>
<dbReference type="SMR" id="Q54ML4"/>
<dbReference type="FunCoup" id="Q54ML4">
    <property type="interactions" value="708"/>
</dbReference>
<dbReference type="STRING" id="44689.Q54ML4"/>
<dbReference type="PaxDb" id="44689-DDB0237545"/>
<dbReference type="EnsemblProtists" id="EAL64472">
    <property type="protein sequence ID" value="EAL64472"/>
    <property type="gene ID" value="DDB_G0285875"/>
</dbReference>
<dbReference type="GeneID" id="8625328"/>
<dbReference type="KEGG" id="ddi:DDB_G0285875"/>
<dbReference type="dictyBase" id="DDB_G0285875"/>
<dbReference type="VEuPathDB" id="AmoebaDB:DDB_G0285875"/>
<dbReference type="eggNOG" id="KOG1837">
    <property type="taxonomic scope" value="Eukaryota"/>
</dbReference>
<dbReference type="HOGENOM" id="CLU_001128_3_0_1"/>
<dbReference type="InParanoid" id="Q54ML4"/>
<dbReference type="OMA" id="YLLLMQS"/>
<dbReference type="PhylomeDB" id="Q54ML4"/>
<dbReference type="Reactome" id="R-DDI-6791226">
    <property type="pathway name" value="Major pathway of rRNA processing in the nucleolus and cytosol"/>
</dbReference>
<dbReference type="PRO" id="PR:Q54ML4"/>
<dbReference type="Proteomes" id="UP000002195">
    <property type="component" value="Chromosome 4"/>
</dbReference>
<dbReference type="GO" id="GO:0030686">
    <property type="term" value="C:90S preribosome"/>
    <property type="evidence" value="ECO:0000318"/>
    <property type="project" value="GO_Central"/>
</dbReference>
<dbReference type="GO" id="GO:0032040">
    <property type="term" value="C:small-subunit processome"/>
    <property type="evidence" value="ECO:0000250"/>
    <property type="project" value="UniProtKB"/>
</dbReference>
<dbReference type="GO" id="GO:0034455">
    <property type="term" value="C:t-UTP complex"/>
    <property type="evidence" value="ECO:0000318"/>
    <property type="project" value="GO_Central"/>
</dbReference>
<dbReference type="GO" id="GO:0030515">
    <property type="term" value="F:snoRNA binding"/>
    <property type="evidence" value="ECO:0000250"/>
    <property type="project" value="dictyBase"/>
</dbReference>
<dbReference type="GO" id="GO:0000462">
    <property type="term" value="P:maturation of SSU-rRNA from tricistronic rRNA transcript (SSU-rRNA, 5.8S rRNA, LSU-rRNA)"/>
    <property type="evidence" value="ECO:0000318"/>
    <property type="project" value="GO_Central"/>
</dbReference>
<dbReference type="GO" id="GO:0045943">
    <property type="term" value="P:positive regulation of transcription by RNA polymerase I"/>
    <property type="evidence" value="ECO:0000318"/>
    <property type="project" value="GO_Central"/>
</dbReference>
<dbReference type="GO" id="GO:0042274">
    <property type="term" value="P:ribosomal small subunit biogenesis"/>
    <property type="evidence" value="ECO:0000250"/>
    <property type="project" value="UniProtKB"/>
</dbReference>
<dbReference type="GO" id="GO:0006364">
    <property type="term" value="P:rRNA processing"/>
    <property type="evidence" value="ECO:0000250"/>
    <property type="project" value="dictyBase"/>
</dbReference>
<dbReference type="FunFam" id="1.25.10.10:FF:002062">
    <property type="entry name" value="HEAT repeat-containing protein 1 homolog"/>
    <property type="match status" value="1"/>
</dbReference>
<dbReference type="Gene3D" id="1.25.10.10">
    <property type="entry name" value="Leucine-rich Repeat Variant"/>
    <property type="match status" value="1"/>
</dbReference>
<dbReference type="InterPro" id="IPR011989">
    <property type="entry name" value="ARM-like"/>
</dbReference>
<dbReference type="InterPro" id="IPR016024">
    <property type="entry name" value="ARM-type_fold"/>
</dbReference>
<dbReference type="InterPro" id="IPR012954">
    <property type="entry name" value="BP28_C_dom"/>
</dbReference>
<dbReference type="InterPro" id="IPR022125">
    <property type="entry name" value="U3snoRNP10_N"/>
</dbReference>
<dbReference type="InterPro" id="IPR040191">
    <property type="entry name" value="UTP10"/>
</dbReference>
<dbReference type="PANTHER" id="PTHR13457">
    <property type="entry name" value="BAP28"/>
    <property type="match status" value="1"/>
</dbReference>
<dbReference type="PANTHER" id="PTHR13457:SF1">
    <property type="entry name" value="HEAT REPEAT-CONTAINING PROTEIN 1"/>
    <property type="match status" value="1"/>
</dbReference>
<dbReference type="Pfam" id="PF08146">
    <property type="entry name" value="BP28CT"/>
    <property type="match status" value="1"/>
</dbReference>
<dbReference type="Pfam" id="PF12397">
    <property type="entry name" value="U3snoRNP10"/>
    <property type="match status" value="1"/>
</dbReference>
<dbReference type="SMART" id="SM01036">
    <property type="entry name" value="BP28CT"/>
    <property type="match status" value="1"/>
</dbReference>
<dbReference type="SUPFAM" id="SSF48371">
    <property type="entry name" value="ARM repeat"/>
    <property type="match status" value="1"/>
</dbReference>
<name>HEAT1_DICDI</name>
<evidence type="ECO:0000250" key="1">
    <source>
        <dbReference type="UniProtKB" id="Q9H583"/>
    </source>
</evidence>
<evidence type="ECO:0000256" key="2">
    <source>
        <dbReference type="SAM" id="MobiDB-lite"/>
    </source>
</evidence>
<evidence type="ECO:0000305" key="3"/>
<gene>
    <name type="primary">heatr1</name>
    <name type="ORF">DDB_G0285875</name>
</gene>
<comment type="function">
    <text evidence="1">Ribosome biogenesis factor. Involved in nucleolar processing of pre-18S ribosomal RNA. Required for optimal pre-ribosomal RNA transcription by RNA polymerase I. Part of the small subunit (SSU) processome, first precursor of the small eukaryotic ribosomal subunit. During the assembly of the SSU processome in the nucleolus, many ribosome biogenesis factors, an RNA chaperone and ribosomal proteins associate with the nascent pre-rRNA and work in concert to generate RNA folding, modifications, rearrangements and cleavage as well as targeted degradation of pre-ribosomal RNA by the RNA exosome.</text>
</comment>
<comment type="subunit">
    <text evidence="1">Part of the small subunit (SSU) processome, composed of more than 70 proteins and the RNA chaperone small nucleolar RNA (snoRNA) U3.</text>
</comment>
<comment type="subcellular location">
    <subcellularLocation>
        <location evidence="1">Nucleus</location>
        <location evidence="1">Nucleolus</location>
    </subcellularLocation>
</comment>
<comment type="similarity">
    <text evidence="3">Belongs to the HEATR1/UTP10 family.</text>
</comment>
<accession>Q54ML4</accession>
<reference key="1">
    <citation type="journal article" date="2005" name="Nature">
        <title>The genome of the social amoeba Dictyostelium discoideum.</title>
        <authorList>
            <person name="Eichinger L."/>
            <person name="Pachebat J.A."/>
            <person name="Gloeckner G."/>
            <person name="Rajandream M.A."/>
            <person name="Sucgang R."/>
            <person name="Berriman M."/>
            <person name="Song J."/>
            <person name="Olsen R."/>
            <person name="Szafranski K."/>
            <person name="Xu Q."/>
            <person name="Tunggal B."/>
            <person name="Kummerfeld S."/>
            <person name="Madera M."/>
            <person name="Konfortov B.A."/>
            <person name="Rivero F."/>
            <person name="Bankier A.T."/>
            <person name="Lehmann R."/>
            <person name="Hamlin N."/>
            <person name="Davies R."/>
            <person name="Gaudet P."/>
            <person name="Fey P."/>
            <person name="Pilcher K."/>
            <person name="Chen G."/>
            <person name="Saunders D."/>
            <person name="Sodergren E.J."/>
            <person name="Davis P."/>
            <person name="Kerhornou A."/>
            <person name="Nie X."/>
            <person name="Hall N."/>
            <person name="Anjard C."/>
            <person name="Hemphill L."/>
            <person name="Bason N."/>
            <person name="Farbrother P."/>
            <person name="Desany B."/>
            <person name="Just E."/>
            <person name="Morio T."/>
            <person name="Rost R."/>
            <person name="Churcher C.M."/>
            <person name="Cooper J."/>
            <person name="Haydock S."/>
            <person name="van Driessche N."/>
            <person name="Cronin A."/>
            <person name="Goodhead I."/>
            <person name="Muzny D.M."/>
            <person name="Mourier T."/>
            <person name="Pain A."/>
            <person name="Lu M."/>
            <person name="Harper D."/>
            <person name="Lindsay R."/>
            <person name="Hauser H."/>
            <person name="James K.D."/>
            <person name="Quiles M."/>
            <person name="Madan Babu M."/>
            <person name="Saito T."/>
            <person name="Buchrieser C."/>
            <person name="Wardroper A."/>
            <person name="Felder M."/>
            <person name="Thangavelu M."/>
            <person name="Johnson D."/>
            <person name="Knights A."/>
            <person name="Loulseged H."/>
            <person name="Mungall K.L."/>
            <person name="Oliver K."/>
            <person name="Price C."/>
            <person name="Quail M.A."/>
            <person name="Urushihara H."/>
            <person name="Hernandez J."/>
            <person name="Rabbinowitsch E."/>
            <person name="Steffen D."/>
            <person name="Sanders M."/>
            <person name="Ma J."/>
            <person name="Kohara Y."/>
            <person name="Sharp S."/>
            <person name="Simmonds M.N."/>
            <person name="Spiegler S."/>
            <person name="Tivey A."/>
            <person name="Sugano S."/>
            <person name="White B."/>
            <person name="Walker D."/>
            <person name="Woodward J.R."/>
            <person name="Winckler T."/>
            <person name="Tanaka Y."/>
            <person name="Shaulsky G."/>
            <person name="Schleicher M."/>
            <person name="Weinstock G.M."/>
            <person name="Rosenthal A."/>
            <person name="Cox E.C."/>
            <person name="Chisholm R.L."/>
            <person name="Gibbs R.A."/>
            <person name="Loomis W.F."/>
            <person name="Platzer M."/>
            <person name="Kay R.R."/>
            <person name="Williams J.G."/>
            <person name="Dear P.H."/>
            <person name="Noegel A.A."/>
            <person name="Barrell B.G."/>
            <person name="Kuspa A."/>
        </authorList>
    </citation>
    <scope>NUCLEOTIDE SEQUENCE [LARGE SCALE GENOMIC DNA]</scope>
    <source>
        <strain>AX4</strain>
    </source>
</reference>
<sequence length="2237" mass="254183">MTTSLDKQLLQVKEKIHYVDVSKKRDSLLFGAVEAANIDLDSVLAMGQEGLSELINIDSRFKCFQLTLFSDNSKSFNRVLENKEENNKIDIEINKFLELQSNYFLLSSAHKSLEWLIRRYRINEFNIDSIISSIIPYHESNIFAKFLSILRFEFNKKWQFLTGVQENKVYIPREYFIGVVGSHPFFLEFIYSTIENYDKKDVMSKPLISFFTAFLIELLSANTTSYIRDTLSCLTKCLKSKNSDLQLSSYMILSIIASKVTLSKDVIELLFKTTLKHCTNNFSQAFTFLMVLFQKQKFDSLPNETLKTLVSIPALFEILLDFNSQEKSLDRVLLILFKYLSKSCIESAESYTLLSQLIEELVPISNQYHVLIFNTLTKSYLATTKNSSKDEVDESVINILRSLNSEVVQDEFKKLSNNNNNNNNNNNNKQKLNEIIKLQKSVLQQKTITTSSSNTIFLKLQSNIPSERKEGLTLFKKEYCSKTGKEKEETTTSTDFNSISKSFSSTIYQRLIDSDGSIVKEAWNLPSLNLIVSPKELLKASIEFFKVQSFLNDKKLLDTVLSTITSVVVNQSSNSSLTPDFVSILLPQLLDISTTTTTTATSIIKKLNKDIHPIFNNITSSNIESLIKSISTNLDKESNITFINQISKSTFSTFKSDIFIILILLNSIISCNNNNNNKKNNNNLIYQMFNIIVEISKSYLSKEESIITNINNLQEVYKIINENNNNNFNLKQQISLICSLLSIAIDSLFTISPEQFMKQLQNSSLSSSSNTIEEKMIKEIQNICKLIFNSKITNIDLVLRSIVKKFFGNQLVFFKFLSQFWEVNENSENQDITTIYQSLCLSGILVNSKSFNRYLINNNQAVALIPYLLLLKNQDSSIRSTSLDSIQEIYKQIKSSSIEASSSTTTSNRLNFYTSNQPTIELKVLIKFLAQLVQYKNEITMDKTFLDSYFSKVLFNSQISSSSKASSSSDDDDDDDDDVDQDVSKMTKQDIELIGKFLISSSLLIESLSSRLTMLQSLQSIKDDVTFVEVTINYISQLLENVKNATLTYDESLILDILLKRLGQTSVLTNPKTKKQSLSLFISSLSISNELDLTIAGGGNDKPIKYTPLVALIGSINKSLLLTVPVKEQIGIVETVLSYFFSESNQIKQLAKNTLLSVLVDATVILPMLLPEKQPQQQQQSTTSLPIPRYNSLFELIRLNSSKINGISILVTPILSIIKKMETSIVENVEKDALEYCKQLAMASLGSIIDCSSVKDVKSLETSFDISIIIKCVESSNNLQTCSSALILLSNMASKFPQKLFKFMESIIKMIKFVLTNGDDNFSFMILERFLIQLLPSLVKQGISLVQIFKLFLDSFSSIPKKFRLQLFNCICQSVAYKQLHILFSLILTKKIQDLRIITNKLKHLDKDTIMSSDEQIKEEIDYEQFNEFISQFSDQIPVLEMSTSLGSLCQSINLISIESGNCVEALSEEEEEICSLLSRNNSKDNRLLQANTLDFICERLSSKLYLDSFSFDLTSQQKELVETKYLGAFENLLILLKKTTEYSEKTSNIKLNGSANSISIASGKDKFIKKLLSSINLCMDRYGQLLSVKGFISTITQLLNHSDSNVRRRSLVIFNEKITLVKDDLTQDQVNQFLSLIDSFTRIIDSQNETETNKQTSLLSFEILARNFSTTNATAFLSQIPIIIKSMGHSSHQVVSSSLICIATLCCELQAKTIPYIPQFFPVLLNTLTGSYKTNVEEENETRTLLQISCISSLEMMLNTISKFLSPYLPQLLNALLHPRLTSNSMLSGKLFAQVKRLLNILTKNVEFRLLLPAMFSAYEFAVQSENDLSLICLFDFVGDISANLGPKDIALHHKSIFKFYLQCFEFRKKYKNRVKNADKVEDHIISSFMTLVMKLNENLFKPLFIKVLDWALNIQNGQQNGKHTDDDDEENGSDDEESDEDKPKKKKLVNGKSKSTKTQPEISKDNLLFFYKIVNSLASNLKTIFVPYFGYFFDDSIRQLQNIYSNIPFSQQPQQQPQQPTVNDNTTITLLNNNNNNNNNNINNKRKKNQNITNTTTTNNNSNNNLNNSNNNNIDQDESILCFVISALEKCFMYDTDGFLDKQKFEQILPALVNQLDNQMGTVESYKLRVSRYIAPTITQLAVVINQDLLWKHLNHTVLMKTRSPYSIVRYSSMVVVQSLHKKMGEQLLILLPETIPFISELLEDSVPEVEQITQDVVKIIETHLGAEESISSYL</sequence>
<keyword id="KW-0539">Nucleus</keyword>
<keyword id="KW-1185">Reference proteome</keyword>
<keyword id="KW-0677">Repeat</keyword>
<keyword id="KW-0687">Ribonucleoprotein</keyword>
<keyword id="KW-0690">Ribosome biogenesis</keyword>
<keyword id="KW-0698">rRNA processing</keyword>
<keyword id="KW-0804">Transcription</keyword>
<keyword id="KW-0805">Transcription regulation</keyword>
<organism>
    <name type="scientific">Dictyostelium discoideum</name>
    <name type="common">Social amoeba</name>
    <dbReference type="NCBI Taxonomy" id="44689"/>
    <lineage>
        <taxon>Eukaryota</taxon>
        <taxon>Amoebozoa</taxon>
        <taxon>Evosea</taxon>
        <taxon>Eumycetozoa</taxon>
        <taxon>Dictyostelia</taxon>
        <taxon>Dictyosteliales</taxon>
        <taxon>Dictyosteliaceae</taxon>
        <taxon>Dictyostelium</taxon>
    </lineage>
</organism>
<protein>
    <recommendedName>
        <fullName>HEAT repeat-containing protein 1 homolog</fullName>
    </recommendedName>
</protein>
<feature type="chain" id="PRO_0000330922" description="HEAT repeat-containing protein 1 homolog">
    <location>
        <begin position="1"/>
        <end position="2237"/>
    </location>
</feature>
<feature type="repeat" description="HEAT 1">
    <location>
        <begin position="224"/>
        <end position="262"/>
    </location>
</feature>
<feature type="repeat" description="HEAT 2">
    <location>
        <begin position="858"/>
        <end position="895"/>
    </location>
</feature>
<feature type="repeat" description="HEAT 3">
    <location>
        <begin position="1586"/>
        <end position="1624"/>
    </location>
</feature>
<feature type="repeat" description="HEAT 4">
    <location>
        <begin position="1674"/>
        <end position="1712"/>
    </location>
</feature>
<feature type="repeat" description="HEAT 5">
    <location>
        <begin position="1715"/>
        <end position="1761"/>
    </location>
</feature>
<feature type="repeat" description="HEAT 6">
    <location>
        <begin position="1767"/>
        <end position="1805"/>
    </location>
</feature>
<feature type="repeat" description="HEAT 7">
    <location>
        <begin position="2104"/>
        <end position="2142"/>
    </location>
</feature>
<feature type="repeat" description="HEAT 8">
    <location>
        <begin position="2191"/>
        <end position="2229"/>
    </location>
</feature>
<feature type="region of interest" description="Disordered" evidence="2">
    <location>
        <begin position="962"/>
        <end position="981"/>
    </location>
</feature>
<feature type="region of interest" description="Disordered" evidence="2">
    <location>
        <begin position="1920"/>
        <end position="1960"/>
    </location>
</feature>
<feature type="region of interest" description="Disordered" evidence="2">
    <location>
        <begin position="2031"/>
        <end position="2073"/>
    </location>
</feature>
<feature type="compositionally biased region" description="Acidic residues" evidence="2">
    <location>
        <begin position="969"/>
        <end position="981"/>
    </location>
</feature>
<feature type="compositionally biased region" description="Acidic residues" evidence="2">
    <location>
        <begin position="1928"/>
        <end position="1942"/>
    </location>
</feature>
<feature type="compositionally biased region" description="Low complexity" evidence="2">
    <location>
        <begin position="2031"/>
        <end position="2045"/>
    </location>
</feature>
<feature type="compositionally biased region" description="Low complexity" evidence="2">
    <location>
        <begin position="2052"/>
        <end position="2073"/>
    </location>
</feature>